<dbReference type="EC" id="2.7.1.130" evidence="1"/>
<dbReference type="EMBL" id="CP000109">
    <property type="protein sequence ID" value="ABB41553.1"/>
    <property type="molecule type" value="Genomic_DNA"/>
</dbReference>
<dbReference type="SMR" id="Q31H20"/>
<dbReference type="STRING" id="317025.Tcr_0958"/>
<dbReference type="KEGG" id="tcx:Tcr_0958"/>
<dbReference type="eggNOG" id="COG1663">
    <property type="taxonomic scope" value="Bacteria"/>
</dbReference>
<dbReference type="HOGENOM" id="CLU_038816_2_0_6"/>
<dbReference type="OrthoDB" id="9766423at2"/>
<dbReference type="UniPathway" id="UPA00359">
    <property type="reaction ID" value="UER00482"/>
</dbReference>
<dbReference type="GO" id="GO:0005886">
    <property type="term" value="C:plasma membrane"/>
    <property type="evidence" value="ECO:0007669"/>
    <property type="project" value="TreeGrafter"/>
</dbReference>
<dbReference type="GO" id="GO:0005524">
    <property type="term" value="F:ATP binding"/>
    <property type="evidence" value="ECO:0007669"/>
    <property type="project" value="UniProtKB-UniRule"/>
</dbReference>
<dbReference type="GO" id="GO:0009029">
    <property type="term" value="F:tetraacyldisaccharide 4'-kinase activity"/>
    <property type="evidence" value="ECO:0007669"/>
    <property type="project" value="UniProtKB-UniRule"/>
</dbReference>
<dbReference type="GO" id="GO:0009245">
    <property type="term" value="P:lipid A biosynthetic process"/>
    <property type="evidence" value="ECO:0007669"/>
    <property type="project" value="UniProtKB-UniRule"/>
</dbReference>
<dbReference type="GO" id="GO:0009244">
    <property type="term" value="P:lipopolysaccharide core region biosynthetic process"/>
    <property type="evidence" value="ECO:0007669"/>
    <property type="project" value="TreeGrafter"/>
</dbReference>
<dbReference type="HAMAP" id="MF_00409">
    <property type="entry name" value="LpxK"/>
    <property type="match status" value="1"/>
</dbReference>
<dbReference type="InterPro" id="IPR003758">
    <property type="entry name" value="LpxK"/>
</dbReference>
<dbReference type="InterPro" id="IPR027417">
    <property type="entry name" value="P-loop_NTPase"/>
</dbReference>
<dbReference type="NCBIfam" id="TIGR00682">
    <property type="entry name" value="lpxK"/>
    <property type="match status" value="1"/>
</dbReference>
<dbReference type="PANTHER" id="PTHR42724">
    <property type="entry name" value="TETRAACYLDISACCHARIDE 4'-KINASE"/>
    <property type="match status" value="1"/>
</dbReference>
<dbReference type="PANTHER" id="PTHR42724:SF1">
    <property type="entry name" value="TETRAACYLDISACCHARIDE 4'-KINASE, MITOCHONDRIAL-RELATED"/>
    <property type="match status" value="1"/>
</dbReference>
<dbReference type="Pfam" id="PF02606">
    <property type="entry name" value="LpxK"/>
    <property type="match status" value="1"/>
</dbReference>
<dbReference type="SUPFAM" id="SSF52540">
    <property type="entry name" value="P-loop containing nucleoside triphosphate hydrolases"/>
    <property type="match status" value="1"/>
</dbReference>
<gene>
    <name evidence="1" type="primary">lpxK</name>
    <name type="ordered locus">Tcr_0958</name>
</gene>
<protein>
    <recommendedName>
        <fullName evidence="1">Tetraacyldisaccharide 4'-kinase</fullName>
        <ecNumber evidence="1">2.7.1.130</ecNumber>
    </recommendedName>
    <alternativeName>
        <fullName evidence="1">Lipid A 4'-kinase</fullName>
    </alternativeName>
</protein>
<comment type="function">
    <text evidence="1">Transfers the gamma-phosphate of ATP to the 4'-position of a tetraacyldisaccharide 1-phosphate intermediate (termed DS-1-P) to form tetraacyldisaccharide 1,4'-bis-phosphate (lipid IVA).</text>
</comment>
<comment type="catalytic activity">
    <reaction evidence="1">
        <text>a lipid A disaccharide + ATP = a lipid IVA + ADP + H(+)</text>
        <dbReference type="Rhea" id="RHEA:67840"/>
        <dbReference type="ChEBI" id="CHEBI:15378"/>
        <dbReference type="ChEBI" id="CHEBI:30616"/>
        <dbReference type="ChEBI" id="CHEBI:176343"/>
        <dbReference type="ChEBI" id="CHEBI:176425"/>
        <dbReference type="ChEBI" id="CHEBI:456216"/>
        <dbReference type="EC" id="2.7.1.130"/>
    </reaction>
</comment>
<comment type="pathway">
    <text evidence="1">Glycolipid biosynthesis; lipid IV(A) biosynthesis; lipid IV(A) from (3R)-3-hydroxytetradecanoyl-[acyl-carrier-protein] and UDP-N-acetyl-alpha-D-glucosamine: step 6/6.</text>
</comment>
<comment type="similarity">
    <text evidence="1">Belongs to the LpxK family.</text>
</comment>
<accession>Q31H20</accession>
<name>LPXK_HYDCU</name>
<evidence type="ECO:0000255" key="1">
    <source>
        <dbReference type="HAMAP-Rule" id="MF_00409"/>
    </source>
</evidence>
<keyword id="KW-0067">ATP-binding</keyword>
<keyword id="KW-0418">Kinase</keyword>
<keyword id="KW-0441">Lipid A biosynthesis</keyword>
<keyword id="KW-0444">Lipid biosynthesis</keyword>
<keyword id="KW-0443">Lipid metabolism</keyword>
<keyword id="KW-0547">Nucleotide-binding</keyword>
<keyword id="KW-0808">Transferase</keyword>
<proteinExistence type="inferred from homology"/>
<organism>
    <name type="scientific">Hydrogenovibrio crunogenus (strain DSM 25203 / XCL-2)</name>
    <name type="common">Thiomicrospira crunogena</name>
    <dbReference type="NCBI Taxonomy" id="317025"/>
    <lineage>
        <taxon>Bacteria</taxon>
        <taxon>Pseudomonadati</taxon>
        <taxon>Pseudomonadota</taxon>
        <taxon>Gammaproteobacteria</taxon>
        <taxon>Thiotrichales</taxon>
        <taxon>Piscirickettsiaceae</taxon>
        <taxon>Hydrogenovibrio</taxon>
    </lineage>
</organism>
<sequence>MSWPTFWYQTPKQSWKTALLWPVGKLVCWVAARRLKRFKKKGPSKITAAQVVVIGNIVVGGSGKTPFIQWLGRQLSEHGLTFGVVSRGYGGQSKVWPQWVTEHSEPTMVGDEPVLLAQSLHCPVAVSPNRADAIALLESKYDLDVIISDDGLQHYKMARDIEIVMMDSERLLGNEYCLPAGPLRESKRRLGLVDFVVWNGGDASDLASETSTIMKLVPQHFRSVANPKMILPISSFKHEKTNAMAGIGNPQRFFNTLSELGIDADVTPFADHKAFQSSDFDTFESTKPLLMTEKDAVKCRAFAQPNWWYLEVQPLCPATFAHQLFHKLGHYDFTI</sequence>
<feature type="chain" id="PRO_0000229985" description="Tetraacyldisaccharide 4'-kinase">
    <location>
        <begin position="1"/>
        <end position="335"/>
    </location>
</feature>
<feature type="binding site" evidence="1">
    <location>
        <begin position="58"/>
        <end position="65"/>
    </location>
    <ligand>
        <name>ATP</name>
        <dbReference type="ChEBI" id="CHEBI:30616"/>
    </ligand>
</feature>
<reference key="1">
    <citation type="journal article" date="2006" name="PLoS Biol.">
        <title>The genome of deep-sea vent chemolithoautotroph Thiomicrospira crunogena XCL-2.</title>
        <authorList>
            <person name="Scott K.M."/>
            <person name="Sievert S.M."/>
            <person name="Abril F.N."/>
            <person name="Ball L.A."/>
            <person name="Barrett C.J."/>
            <person name="Blake R.A."/>
            <person name="Boller A.J."/>
            <person name="Chain P.S.G."/>
            <person name="Clark J.A."/>
            <person name="Davis C.R."/>
            <person name="Detter C."/>
            <person name="Do K.F."/>
            <person name="Dobrinski K.P."/>
            <person name="Faza B.I."/>
            <person name="Fitzpatrick K.A."/>
            <person name="Freyermuth S.K."/>
            <person name="Harmer T.L."/>
            <person name="Hauser L.J."/>
            <person name="Huegler M."/>
            <person name="Kerfeld C.A."/>
            <person name="Klotz M.G."/>
            <person name="Kong W.W."/>
            <person name="Land M."/>
            <person name="Lapidus A."/>
            <person name="Larimer F.W."/>
            <person name="Longo D.L."/>
            <person name="Lucas S."/>
            <person name="Malfatti S.A."/>
            <person name="Massey S.E."/>
            <person name="Martin D.D."/>
            <person name="McCuddin Z."/>
            <person name="Meyer F."/>
            <person name="Moore J.L."/>
            <person name="Ocampo L.H. Jr."/>
            <person name="Paul J.H."/>
            <person name="Paulsen I.T."/>
            <person name="Reep D.K."/>
            <person name="Ren Q."/>
            <person name="Ross R.L."/>
            <person name="Sato P.Y."/>
            <person name="Thomas P."/>
            <person name="Tinkham L.E."/>
            <person name="Zeruth G.T."/>
        </authorList>
    </citation>
    <scope>NUCLEOTIDE SEQUENCE [LARGE SCALE GENOMIC DNA]</scope>
    <source>
        <strain>DSM 25203 / XCL-2</strain>
    </source>
</reference>